<sequence>MSNPKRKILVTCALPYANGAIHLGHMLEHIQADIWVRFQRMRGNEIHFVCADDAHGTPIMLNADKLGITPEQLIEKAKADHIADFAGFNISFDNYHSTHSEENREYTSAIYKKLKANGFIKSKVISQLFDPEKNMFLPDRFVKGTCPKCKAEDQYGDNCEVCASTYSPMDLINPRSVVSGSTPVVKQSEHFFFDLPSFEEMLKAWTRSGSLQPEIANKVQEWFESGLQQWDISRDAPYFGFEIPDSENKFFYVWLDAPIGYMASFKNLCDRTGLNFDDFWKKESDAELYHFIGKDIVYFHSLFWPAMLEGSEYRKPTNVFAHGYVTVDGQKMSKSRGTFIQASTYLKHIDPECLRYYYAAKLNDRIEDLDFNLEDFVQRVNSDIVNKLVNLASRTAGFITKRFEGKLASTLENQALFDEFVAQSEQIATYFETREYNKAIREIMALTDKANKYIDDKAPWVIAKEEGTDAELQAVCSMGLELFRVLMSYLKPVLPKLAERAEAFLQTELRWDNIGSPLFAHSIAPFKSLFSRLEKKQIDAVIEETKALFAESVKAETAKKGKEMTACETKVEPIAPEITIDDFAKLDLRVAKVLKCEAVPKSDKLLRFELDLGDHTRQVFSGIKAAYSQPEELEGRFVIMIANLAPRKMSFGMSEGMILSAGTGGADLYLLSADSGVTAGMQVR</sequence>
<gene>
    <name evidence="1" type="primary">metG</name>
    <name type="ordered locus">HAPS_0149</name>
</gene>
<reference key="1">
    <citation type="journal article" date="2009" name="J. Bacteriol.">
        <title>Complete genome sequence of Haemophilus parasuis SH0165.</title>
        <authorList>
            <person name="Yue M."/>
            <person name="Yang F."/>
            <person name="Yang J."/>
            <person name="Bei W."/>
            <person name="Cai X."/>
            <person name="Chen L."/>
            <person name="Dong J."/>
            <person name="Zhou R."/>
            <person name="Jin M."/>
            <person name="Jin Q."/>
            <person name="Chen H."/>
        </authorList>
    </citation>
    <scope>NUCLEOTIDE SEQUENCE [LARGE SCALE GENOMIC DNA]</scope>
    <source>
        <strain>SH0165</strain>
    </source>
</reference>
<accession>B8F3E3</accession>
<protein>
    <recommendedName>
        <fullName evidence="1">Methionine--tRNA ligase</fullName>
        <ecNumber evidence="1">6.1.1.10</ecNumber>
    </recommendedName>
    <alternativeName>
        <fullName evidence="1">Methionyl-tRNA synthetase</fullName>
        <shortName evidence="1">MetRS</shortName>
    </alternativeName>
</protein>
<proteinExistence type="inferred from homology"/>
<comment type="function">
    <text evidence="1">Is required not only for elongation of protein synthesis but also for the initiation of all mRNA translation through initiator tRNA(fMet) aminoacylation.</text>
</comment>
<comment type="catalytic activity">
    <reaction evidence="1">
        <text>tRNA(Met) + L-methionine + ATP = L-methionyl-tRNA(Met) + AMP + diphosphate</text>
        <dbReference type="Rhea" id="RHEA:13481"/>
        <dbReference type="Rhea" id="RHEA-COMP:9667"/>
        <dbReference type="Rhea" id="RHEA-COMP:9698"/>
        <dbReference type="ChEBI" id="CHEBI:30616"/>
        <dbReference type="ChEBI" id="CHEBI:33019"/>
        <dbReference type="ChEBI" id="CHEBI:57844"/>
        <dbReference type="ChEBI" id="CHEBI:78442"/>
        <dbReference type="ChEBI" id="CHEBI:78530"/>
        <dbReference type="ChEBI" id="CHEBI:456215"/>
        <dbReference type="EC" id="6.1.1.10"/>
    </reaction>
</comment>
<comment type="cofactor">
    <cofactor evidence="1">
        <name>Zn(2+)</name>
        <dbReference type="ChEBI" id="CHEBI:29105"/>
    </cofactor>
    <text evidence="1">Binds 1 zinc ion per subunit.</text>
</comment>
<comment type="subunit">
    <text evidence="1">Homodimer.</text>
</comment>
<comment type="subcellular location">
    <subcellularLocation>
        <location evidence="1">Cytoplasm</location>
    </subcellularLocation>
</comment>
<comment type="similarity">
    <text evidence="1">Belongs to the class-I aminoacyl-tRNA synthetase family. MetG type 1 subfamily.</text>
</comment>
<name>SYM_GLAP5</name>
<dbReference type="EC" id="6.1.1.10" evidence="1"/>
<dbReference type="EMBL" id="CP001321">
    <property type="protein sequence ID" value="ACL31845.1"/>
    <property type="molecule type" value="Genomic_DNA"/>
</dbReference>
<dbReference type="RefSeq" id="WP_012621578.1">
    <property type="nucleotide sequence ID" value="NC_011852.1"/>
</dbReference>
<dbReference type="SMR" id="B8F3E3"/>
<dbReference type="STRING" id="557723.HAPS_0149"/>
<dbReference type="KEGG" id="hap:HAPS_0149"/>
<dbReference type="PATRIC" id="fig|557723.8.peg.157"/>
<dbReference type="HOGENOM" id="CLU_009710_7_0_6"/>
<dbReference type="Proteomes" id="UP000006743">
    <property type="component" value="Chromosome"/>
</dbReference>
<dbReference type="GO" id="GO:0005829">
    <property type="term" value="C:cytosol"/>
    <property type="evidence" value="ECO:0007669"/>
    <property type="project" value="TreeGrafter"/>
</dbReference>
<dbReference type="GO" id="GO:0005524">
    <property type="term" value="F:ATP binding"/>
    <property type="evidence" value="ECO:0007669"/>
    <property type="project" value="UniProtKB-UniRule"/>
</dbReference>
<dbReference type="GO" id="GO:0046872">
    <property type="term" value="F:metal ion binding"/>
    <property type="evidence" value="ECO:0007669"/>
    <property type="project" value="UniProtKB-KW"/>
</dbReference>
<dbReference type="GO" id="GO:0004825">
    <property type="term" value="F:methionine-tRNA ligase activity"/>
    <property type="evidence" value="ECO:0007669"/>
    <property type="project" value="UniProtKB-UniRule"/>
</dbReference>
<dbReference type="GO" id="GO:0000049">
    <property type="term" value="F:tRNA binding"/>
    <property type="evidence" value="ECO:0007669"/>
    <property type="project" value="UniProtKB-KW"/>
</dbReference>
<dbReference type="GO" id="GO:0006431">
    <property type="term" value="P:methionyl-tRNA aminoacylation"/>
    <property type="evidence" value="ECO:0007669"/>
    <property type="project" value="UniProtKB-UniRule"/>
</dbReference>
<dbReference type="CDD" id="cd07957">
    <property type="entry name" value="Anticodon_Ia_Met"/>
    <property type="match status" value="1"/>
</dbReference>
<dbReference type="CDD" id="cd00814">
    <property type="entry name" value="MetRS_core"/>
    <property type="match status" value="1"/>
</dbReference>
<dbReference type="CDD" id="cd02800">
    <property type="entry name" value="tRNA_bind_EcMetRS_like"/>
    <property type="match status" value="1"/>
</dbReference>
<dbReference type="FunFam" id="1.10.730.10:FF:000005">
    <property type="entry name" value="Methionine--tRNA ligase"/>
    <property type="match status" value="1"/>
</dbReference>
<dbReference type="FunFam" id="2.20.28.20:FF:000001">
    <property type="entry name" value="Methionine--tRNA ligase"/>
    <property type="match status" value="1"/>
</dbReference>
<dbReference type="FunFam" id="2.40.50.140:FF:000042">
    <property type="entry name" value="Methionine--tRNA ligase"/>
    <property type="match status" value="1"/>
</dbReference>
<dbReference type="Gene3D" id="3.40.50.620">
    <property type="entry name" value="HUPs"/>
    <property type="match status" value="1"/>
</dbReference>
<dbReference type="Gene3D" id="1.10.730.10">
    <property type="entry name" value="Isoleucyl-tRNA Synthetase, Domain 1"/>
    <property type="match status" value="1"/>
</dbReference>
<dbReference type="Gene3D" id="2.20.28.20">
    <property type="entry name" value="Methionyl-tRNA synthetase, Zn-domain"/>
    <property type="match status" value="1"/>
</dbReference>
<dbReference type="Gene3D" id="2.40.50.140">
    <property type="entry name" value="Nucleic acid-binding proteins"/>
    <property type="match status" value="1"/>
</dbReference>
<dbReference type="HAMAP" id="MF_00098">
    <property type="entry name" value="Met_tRNA_synth_type1"/>
    <property type="match status" value="1"/>
</dbReference>
<dbReference type="InterPro" id="IPR001412">
    <property type="entry name" value="aa-tRNA-synth_I_CS"/>
</dbReference>
<dbReference type="InterPro" id="IPR041872">
    <property type="entry name" value="Anticodon_Met"/>
</dbReference>
<dbReference type="InterPro" id="IPR004495">
    <property type="entry name" value="Met-tRNA-synth_bsu_C"/>
</dbReference>
<dbReference type="InterPro" id="IPR023458">
    <property type="entry name" value="Met-tRNA_ligase_1"/>
</dbReference>
<dbReference type="InterPro" id="IPR014758">
    <property type="entry name" value="Met-tRNA_synth"/>
</dbReference>
<dbReference type="InterPro" id="IPR015413">
    <property type="entry name" value="Methionyl/Leucyl_tRNA_Synth"/>
</dbReference>
<dbReference type="InterPro" id="IPR033911">
    <property type="entry name" value="MetRS_core"/>
</dbReference>
<dbReference type="InterPro" id="IPR029038">
    <property type="entry name" value="MetRS_Zn"/>
</dbReference>
<dbReference type="InterPro" id="IPR012340">
    <property type="entry name" value="NA-bd_OB-fold"/>
</dbReference>
<dbReference type="InterPro" id="IPR014729">
    <property type="entry name" value="Rossmann-like_a/b/a_fold"/>
</dbReference>
<dbReference type="InterPro" id="IPR002547">
    <property type="entry name" value="tRNA-bd_dom"/>
</dbReference>
<dbReference type="InterPro" id="IPR009080">
    <property type="entry name" value="tRNAsynth_Ia_anticodon-bd"/>
</dbReference>
<dbReference type="NCBIfam" id="TIGR00398">
    <property type="entry name" value="metG"/>
    <property type="match status" value="1"/>
</dbReference>
<dbReference type="NCBIfam" id="TIGR00399">
    <property type="entry name" value="metG_C_term"/>
    <property type="match status" value="1"/>
</dbReference>
<dbReference type="NCBIfam" id="NF001100">
    <property type="entry name" value="PRK00133.1"/>
    <property type="match status" value="1"/>
</dbReference>
<dbReference type="PANTHER" id="PTHR45765">
    <property type="entry name" value="METHIONINE--TRNA LIGASE"/>
    <property type="match status" value="1"/>
</dbReference>
<dbReference type="PANTHER" id="PTHR45765:SF1">
    <property type="entry name" value="METHIONINE--TRNA LIGASE, CYTOPLASMIC"/>
    <property type="match status" value="1"/>
</dbReference>
<dbReference type="Pfam" id="PF19303">
    <property type="entry name" value="Anticodon_3"/>
    <property type="match status" value="1"/>
</dbReference>
<dbReference type="Pfam" id="PF09334">
    <property type="entry name" value="tRNA-synt_1g"/>
    <property type="match status" value="1"/>
</dbReference>
<dbReference type="Pfam" id="PF01588">
    <property type="entry name" value="tRNA_bind"/>
    <property type="match status" value="1"/>
</dbReference>
<dbReference type="PRINTS" id="PR01041">
    <property type="entry name" value="TRNASYNTHMET"/>
</dbReference>
<dbReference type="SUPFAM" id="SSF47323">
    <property type="entry name" value="Anticodon-binding domain of a subclass of class I aminoacyl-tRNA synthetases"/>
    <property type="match status" value="1"/>
</dbReference>
<dbReference type="SUPFAM" id="SSF57770">
    <property type="entry name" value="Methionyl-tRNA synthetase (MetRS), Zn-domain"/>
    <property type="match status" value="1"/>
</dbReference>
<dbReference type="SUPFAM" id="SSF50249">
    <property type="entry name" value="Nucleic acid-binding proteins"/>
    <property type="match status" value="1"/>
</dbReference>
<dbReference type="SUPFAM" id="SSF52374">
    <property type="entry name" value="Nucleotidylyl transferase"/>
    <property type="match status" value="1"/>
</dbReference>
<dbReference type="PROSITE" id="PS00178">
    <property type="entry name" value="AA_TRNA_LIGASE_I"/>
    <property type="match status" value="1"/>
</dbReference>
<dbReference type="PROSITE" id="PS50886">
    <property type="entry name" value="TRBD"/>
    <property type="match status" value="1"/>
</dbReference>
<feature type="chain" id="PRO_1000118734" description="Methionine--tRNA ligase">
    <location>
        <begin position="1"/>
        <end position="684"/>
    </location>
</feature>
<feature type="domain" description="tRNA-binding" evidence="1">
    <location>
        <begin position="582"/>
        <end position="684"/>
    </location>
</feature>
<feature type="short sequence motif" description="'HIGH' region">
    <location>
        <begin position="15"/>
        <end position="25"/>
    </location>
</feature>
<feature type="short sequence motif" description="'KMSKS' region">
    <location>
        <begin position="331"/>
        <end position="335"/>
    </location>
</feature>
<feature type="binding site" evidence="1">
    <location>
        <position position="146"/>
    </location>
    <ligand>
        <name>Zn(2+)</name>
        <dbReference type="ChEBI" id="CHEBI:29105"/>
    </ligand>
</feature>
<feature type="binding site" evidence="1">
    <location>
        <position position="149"/>
    </location>
    <ligand>
        <name>Zn(2+)</name>
        <dbReference type="ChEBI" id="CHEBI:29105"/>
    </ligand>
</feature>
<feature type="binding site" evidence="1">
    <location>
        <position position="159"/>
    </location>
    <ligand>
        <name>Zn(2+)</name>
        <dbReference type="ChEBI" id="CHEBI:29105"/>
    </ligand>
</feature>
<feature type="binding site" evidence="1">
    <location>
        <position position="162"/>
    </location>
    <ligand>
        <name>Zn(2+)</name>
        <dbReference type="ChEBI" id="CHEBI:29105"/>
    </ligand>
</feature>
<feature type="binding site" evidence="1">
    <location>
        <position position="334"/>
    </location>
    <ligand>
        <name>ATP</name>
        <dbReference type="ChEBI" id="CHEBI:30616"/>
    </ligand>
</feature>
<evidence type="ECO:0000255" key="1">
    <source>
        <dbReference type="HAMAP-Rule" id="MF_00098"/>
    </source>
</evidence>
<keyword id="KW-0030">Aminoacyl-tRNA synthetase</keyword>
<keyword id="KW-0067">ATP-binding</keyword>
<keyword id="KW-0963">Cytoplasm</keyword>
<keyword id="KW-0436">Ligase</keyword>
<keyword id="KW-0479">Metal-binding</keyword>
<keyword id="KW-0547">Nucleotide-binding</keyword>
<keyword id="KW-0648">Protein biosynthesis</keyword>
<keyword id="KW-1185">Reference proteome</keyword>
<keyword id="KW-0694">RNA-binding</keyword>
<keyword id="KW-0820">tRNA-binding</keyword>
<keyword id="KW-0862">Zinc</keyword>
<organism>
    <name type="scientific">Glaesserella parasuis serovar 5 (strain SH0165)</name>
    <name type="common">Haemophilus parasuis</name>
    <dbReference type="NCBI Taxonomy" id="557723"/>
    <lineage>
        <taxon>Bacteria</taxon>
        <taxon>Pseudomonadati</taxon>
        <taxon>Pseudomonadota</taxon>
        <taxon>Gammaproteobacteria</taxon>
        <taxon>Pasteurellales</taxon>
        <taxon>Pasteurellaceae</taxon>
        <taxon>Glaesserella</taxon>
    </lineage>
</organism>